<name>MDH_MICGL</name>
<evidence type="ECO:0000250" key="1"/>
<evidence type="ECO:0000255" key="2">
    <source>
        <dbReference type="PROSITE-ProRule" id="PRU10004"/>
    </source>
</evidence>
<evidence type="ECO:0000305" key="3"/>
<dbReference type="EC" id="1.1.1.37"/>
<dbReference type="PIR" id="S04958">
    <property type="entry name" value="S04958"/>
</dbReference>
<dbReference type="GO" id="GO:0030060">
    <property type="term" value="F:L-malate dehydrogenase (NAD+) activity"/>
    <property type="evidence" value="ECO:0007669"/>
    <property type="project" value="UniProtKB-EC"/>
</dbReference>
<dbReference type="GO" id="GO:0006099">
    <property type="term" value="P:tricarboxylic acid cycle"/>
    <property type="evidence" value="ECO:0007669"/>
    <property type="project" value="UniProtKB-KW"/>
</dbReference>
<dbReference type="Gene3D" id="3.40.50.720">
    <property type="entry name" value="NAD(P)-binding Rossmann-like Domain"/>
    <property type="match status" value="1"/>
</dbReference>
<dbReference type="InterPro" id="IPR036291">
    <property type="entry name" value="NAD(P)-bd_dom_sf"/>
</dbReference>
<dbReference type="SUPFAM" id="SSF51735">
    <property type="entry name" value="NAD(P)-binding Rossmann-fold domains"/>
    <property type="match status" value="1"/>
</dbReference>
<reference key="1">
    <citation type="journal article" date="1989" name="Biol. Chem. Hoppe-Seyler">
        <title>Purification and N-terminal amino-acid sequences of bacterial malate dehydrogenases from six actinomycetales strains and from Phenylobacterium immobile, strain E.</title>
        <authorList>
            <person name="Rommel T.O."/>
            <person name="Hund H.-K."/>
            <person name="Speth A.R."/>
            <person name="Lingens F."/>
        </authorList>
    </citation>
    <scope>PROTEIN SEQUENCE</scope>
</reference>
<comment type="function">
    <text evidence="1">Catalyzes the reversible oxidation of malate to oxaloacetate.</text>
</comment>
<comment type="catalytic activity">
    <reaction evidence="2">
        <text>(S)-malate + NAD(+) = oxaloacetate + NADH + H(+)</text>
        <dbReference type="Rhea" id="RHEA:21432"/>
        <dbReference type="ChEBI" id="CHEBI:15378"/>
        <dbReference type="ChEBI" id="CHEBI:15589"/>
        <dbReference type="ChEBI" id="CHEBI:16452"/>
        <dbReference type="ChEBI" id="CHEBI:57540"/>
        <dbReference type="ChEBI" id="CHEBI:57945"/>
        <dbReference type="EC" id="1.1.1.37"/>
    </reaction>
</comment>
<comment type="similarity">
    <text evidence="3">Belongs to the LDH/MDH superfamily. MDH type 2 family.</text>
</comment>
<accession>P19979</accession>
<proteinExistence type="evidence at protein level"/>
<gene>
    <name type="primary">mdh</name>
</gene>
<sequence>TVKVTVTGAAGQIGYALLFR</sequence>
<protein>
    <recommendedName>
        <fullName>Malate dehydrogenase</fullName>
        <ecNumber>1.1.1.37</ecNumber>
    </recommendedName>
</protein>
<feature type="chain" id="PRO_0000113377" description="Malate dehydrogenase">
    <location>
        <begin position="1"/>
        <end position="20" status="greater than"/>
    </location>
</feature>
<feature type="binding site" evidence="1">
    <location>
        <begin position="8"/>
        <end position="14"/>
    </location>
    <ligand>
        <name>NAD(+)</name>
        <dbReference type="ChEBI" id="CHEBI:57540"/>
    </ligand>
</feature>
<feature type="non-terminal residue">
    <location>
        <position position="20"/>
    </location>
</feature>
<organism>
    <name type="scientific">Microtetraspora glauca</name>
    <dbReference type="NCBI Taxonomy" id="1996"/>
    <lineage>
        <taxon>Bacteria</taxon>
        <taxon>Bacillati</taxon>
        <taxon>Actinomycetota</taxon>
        <taxon>Actinomycetes</taxon>
        <taxon>Streptosporangiales</taxon>
        <taxon>Streptosporangiaceae</taxon>
        <taxon>Microtetraspora</taxon>
    </lineage>
</organism>
<keyword id="KW-0903">Direct protein sequencing</keyword>
<keyword id="KW-0520">NAD</keyword>
<keyword id="KW-0560">Oxidoreductase</keyword>
<keyword id="KW-0816">Tricarboxylic acid cycle</keyword>